<comment type="subcellular location">
    <subcellularLocation>
        <location evidence="1">Secreted</location>
    </subcellularLocation>
</comment>
<comment type="similarity">
    <text evidence="3">Belongs to the DEFL family.</text>
</comment>
<comment type="caution">
    <text evidence="3">Could be the product of a pseudogene. Lacks 1 of the 4 disulfide bonds, which are conserved features of the family.</text>
</comment>
<evidence type="ECO:0000250" key="1"/>
<evidence type="ECO:0000255" key="2"/>
<evidence type="ECO:0000305" key="3"/>
<protein>
    <recommendedName>
        <fullName>Defensin-like protein 87</fullName>
    </recommendedName>
</protein>
<name>DEF87_ARATH</name>
<dbReference type="EMBL" id="AC007266">
    <property type="status" value="NOT_ANNOTATED_CDS"/>
    <property type="molecule type" value="Genomic_DNA"/>
</dbReference>
<dbReference type="EMBL" id="CP002685">
    <property type="protein sequence ID" value="AEC07618.1"/>
    <property type="molecule type" value="Genomic_DNA"/>
</dbReference>
<dbReference type="EMBL" id="BT026394">
    <property type="protein sequence ID" value="ABH04501.1"/>
    <property type="molecule type" value="mRNA"/>
</dbReference>
<dbReference type="RefSeq" id="NP_973529.1">
    <property type="nucleotide sequence ID" value="NM_201800.4"/>
</dbReference>
<dbReference type="SMR" id="Q3E7S1"/>
<dbReference type="BioGRID" id="30165">
    <property type="interactions" value="2"/>
</dbReference>
<dbReference type="IntAct" id="Q3E7S1">
    <property type="interactions" value="2"/>
</dbReference>
<dbReference type="STRING" id="3702.Q3E7S1"/>
<dbReference type="PaxDb" id="3702-AT2G24693.1"/>
<dbReference type="EnsemblPlants" id="AT2G24693.1">
    <property type="protein sequence ID" value="AT2G24693.1"/>
    <property type="gene ID" value="AT2G24693"/>
</dbReference>
<dbReference type="GeneID" id="2745555"/>
<dbReference type="Gramene" id="AT2G24693.1">
    <property type="protein sequence ID" value="AT2G24693.1"/>
    <property type="gene ID" value="AT2G24693"/>
</dbReference>
<dbReference type="KEGG" id="ath:AT2G24693"/>
<dbReference type="Araport" id="AT2G24693"/>
<dbReference type="TAIR" id="AT2G24693"/>
<dbReference type="HOGENOM" id="CLU_180308_0_1_1"/>
<dbReference type="InParanoid" id="Q3E7S1"/>
<dbReference type="OrthoDB" id="1034218at2759"/>
<dbReference type="Proteomes" id="UP000006548">
    <property type="component" value="Chromosome 2"/>
</dbReference>
<dbReference type="ExpressionAtlas" id="Q3E7S1">
    <property type="expression patterns" value="baseline"/>
</dbReference>
<dbReference type="GO" id="GO:0005576">
    <property type="term" value="C:extracellular region"/>
    <property type="evidence" value="ECO:0007669"/>
    <property type="project" value="UniProtKB-SubCell"/>
</dbReference>
<dbReference type="GO" id="GO:0050832">
    <property type="term" value="P:defense response to fungus"/>
    <property type="evidence" value="ECO:0007669"/>
    <property type="project" value="UniProtKB-KW"/>
</dbReference>
<dbReference type="GO" id="GO:0031640">
    <property type="term" value="P:killing of cells of another organism"/>
    <property type="evidence" value="ECO:0007669"/>
    <property type="project" value="UniProtKB-KW"/>
</dbReference>
<dbReference type="InterPro" id="IPR010851">
    <property type="entry name" value="DEFL"/>
</dbReference>
<dbReference type="Pfam" id="PF25052">
    <property type="entry name" value="AtDEF-like"/>
    <property type="match status" value="1"/>
</dbReference>
<accession>Q3E7S1</accession>
<reference key="1">
    <citation type="journal article" date="1999" name="Nature">
        <title>Sequence and analysis of chromosome 2 of the plant Arabidopsis thaliana.</title>
        <authorList>
            <person name="Lin X."/>
            <person name="Kaul S."/>
            <person name="Rounsley S.D."/>
            <person name="Shea T.P."/>
            <person name="Benito M.-I."/>
            <person name="Town C.D."/>
            <person name="Fujii C.Y."/>
            <person name="Mason T.M."/>
            <person name="Bowman C.L."/>
            <person name="Barnstead M.E."/>
            <person name="Feldblyum T.V."/>
            <person name="Buell C.R."/>
            <person name="Ketchum K.A."/>
            <person name="Lee J.J."/>
            <person name="Ronning C.M."/>
            <person name="Koo H.L."/>
            <person name="Moffat K.S."/>
            <person name="Cronin L.A."/>
            <person name="Shen M."/>
            <person name="Pai G."/>
            <person name="Van Aken S."/>
            <person name="Umayam L."/>
            <person name="Tallon L.J."/>
            <person name="Gill J.E."/>
            <person name="Adams M.D."/>
            <person name="Carrera A.J."/>
            <person name="Creasy T.H."/>
            <person name="Goodman H.M."/>
            <person name="Somerville C.R."/>
            <person name="Copenhaver G.P."/>
            <person name="Preuss D."/>
            <person name="Nierman W.C."/>
            <person name="White O."/>
            <person name="Eisen J.A."/>
            <person name="Salzberg S.L."/>
            <person name="Fraser C.M."/>
            <person name="Venter J.C."/>
        </authorList>
    </citation>
    <scope>NUCLEOTIDE SEQUENCE [LARGE SCALE GENOMIC DNA]</scope>
    <source>
        <strain>cv. Columbia</strain>
    </source>
</reference>
<reference key="2">
    <citation type="journal article" date="2017" name="Plant J.">
        <title>Araport11: a complete reannotation of the Arabidopsis thaliana reference genome.</title>
        <authorList>
            <person name="Cheng C.Y."/>
            <person name="Krishnakumar V."/>
            <person name="Chan A.P."/>
            <person name="Thibaud-Nissen F."/>
            <person name="Schobel S."/>
            <person name="Town C.D."/>
        </authorList>
    </citation>
    <scope>GENOME REANNOTATION</scope>
    <source>
        <strain>cv. Columbia</strain>
    </source>
</reference>
<reference key="3">
    <citation type="submission" date="2006-08" db="EMBL/GenBank/DDBJ databases">
        <title>Arabidopsis ORF Clones.</title>
        <authorList>
            <person name="Quinitio C."/>
            <person name="Chen H."/>
            <person name="Kim C.J."/>
            <person name="Shinn P."/>
            <person name="Ecker J.R."/>
        </authorList>
    </citation>
    <scope>NUCLEOTIDE SEQUENCE [LARGE SCALE MRNA]</scope>
    <source>
        <strain>cv. Columbia</strain>
    </source>
</reference>
<reference key="4">
    <citation type="journal article" date="2005" name="Plant Physiol.">
        <title>Genome organization of more than 300 defensin-like genes in Arabidopsis.</title>
        <authorList>
            <person name="Silverstein K.A.T."/>
            <person name="Graham M.A."/>
            <person name="Paape T.D."/>
            <person name="VandenBosch K.A."/>
        </authorList>
    </citation>
    <scope>GENE FAMILY</scope>
</reference>
<proteinExistence type="uncertain"/>
<keyword id="KW-0929">Antimicrobial</keyword>
<keyword id="KW-1015">Disulfide bond</keyword>
<keyword id="KW-0295">Fungicide</keyword>
<keyword id="KW-0611">Plant defense</keyword>
<keyword id="KW-1185">Reference proteome</keyword>
<keyword id="KW-0964">Secreted</keyword>
<keyword id="KW-0732">Signal</keyword>
<gene>
    <name type="ordered locus">At2g24693</name>
    <name type="ORF">F27A10</name>
</gene>
<sequence length="73" mass="7859">MTTKKTSSVVLPLLLVFALILMPMVAGQLKSTCRIAEAWKGAKECNAKCAALGTTRGGVCQKFLGDLYCCCWD</sequence>
<organism>
    <name type="scientific">Arabidopsis thaliana</name>
    <name type="common">Mouse-ear cress</name>
    <dbReference type="NCBI Taxonomy" id="3702"/>
    <lineage>
        <taxon>Eukaryota</taxon>
        <taxon>Viridiplantae</taxon>
        <taxon>Streptophyta</taxon>
        <taxon>Embryophyta</taxon>
        <taxon>Tracheophyta</taxon>
        <taxon>Spermatophyta</taxon>
        <taxon>Magnoliopsida</taxon>
        <taxon>eudicotyledons</taxon>
        <taxon>Gunneridae</taxon>
        <taxon>Pentapetalae</taxon>
        <taxon>rosids</taxon>
        <taxon>malvids</taxon>
        <taxon>Brassicales</taxon>
        <taxon>Brassicaceae</taxon>
        <taxon>Camelineae</taxon>
        <taxon>Arabidopsis</taxon>
    </lineage>
</organism>
<feature type="signal peptide" evidence="2">
    <location>
        <begin position="1"/>
        <end position="27"/>
    </location>
</feature>
<feature type="chain" id="PRO_0000379655" description="Defensin-like protein 87">
    <location>
        <begin position="28"/>
        <end position="73"/>
    </location>
</feature>
<feature type="disulfide bond" evidence="1">
    <location>
        <begin position="33"/>
        <end position="71"/>
    </location>
</feature>
<feature type="disulfide bond" evidence="1">
    <location>
        <begin position="45"/>
        <end position="69"/>
    </location>
</feature>
<feature type="disulfide bond" evidence="1">
    <location>
        <begin position="49"/>
        <end position="70"/>
    </location>
</feature>